<feature type="initiator methionine" description="Removed" evidence="3 4 5">
    <location>
        <position position="1"/>
    </location>
</feature>
<feature type="chain" id="PRO_0000145941" description="Phosphoglycerate kinase">
    <location>
        <begin position="2"/>
        <end position="387"/>
    </location>
</feature>
<feature type="binding site" evidence="1">
    <location>
        <begin position="21"/>
        <end position="23"/>
    </location>
    <ligand>
        <name>substrate</name>
    </ligand>
</feature>
<feature type="binding site" evidence="1">
    <location>
        <position position="36"/>
    </location>
    <ligand>
        <name>substrate</name>
    </ligand>
</feature>
<feature type="binding site" evidence="1">
    <location>
        <begin position="59"/>
        <end position="62"/>
    </location>
    <ligand>
        <name>substrate</name>
    </ligand>
</feature>
<feature type="binding site" evidence="1">
    <location>
        <position position="113"/>
    </location>
    <ligand>
        <name>substrate</name>
    </ligand>
</feature>
<feature type="binding site" evidence="1">
    <location>
        <position position="146"/>
    </location>
    <ligand>
        <name>substrate</name>
    </ligand>
</feature>
<feature type="binding site" evidence="1">
    <location>
        <position position="197"/>
    </location>
    <ligand>
        <name>ATP</name>
        <dbReference type="ChEBI" id="CHEBI:30616"/>
    </ligand>
</feature>
<feature type="binding site" evidence="1">
    <location>
        <position position="314"/>
    </location>
    <ligand>
        <name>ATP</name>
        <dbReference type="ChEBI" id="CHEBI:30616"/>
    </ligand>
</feature>
<feature type="binding site" evidence="1">
    <location>
        <begin position="340"/>
        <end position="343"/>
    </location>
    <ligand>
        <name>ATP</name>
        <dbReference type="ChEBI" id="CHEBI:30616"/>
    </ligand>
</feature>
<feature type="modified residue" description="N6-acetyllysine" evidence="2">
    <location>
        <position position="84"/>
    </location>
</feature>
<feature type="helix" evidence="7">
    <location>
        <begin position="6"/>
        <end position="8"/>
    </location>
</feature>
<feature type="strand" evidence="7">
    <location>
        <begin position="15"/>
        <end position="19"/>
    </location>
</feature>
<feature type="strand" evidence="7">
    <location>
        <begin position="30"/>
        <end position="32"/>
    </location>
</feature>
<feature type="helix" evidence="7">
    <location>
        <begin position="35"/>
        <end position="49"/>
    </location>
</feature>
<feature type="strand" evidence="7">
    <location>
        <begin position="53"/>
        <end position="57"/>
    </location>
</feature>
<feature type="helix" evidence="7">
    <location>
        <begin position="70"/>
        <end position="72"/>
    </location>
</feature>
<feature type="helix" evidence="7">
    <location>
        <begin position="75"/>
        <end position="84"/>
    </location>
</feature>
<feature type="strand" evidence="7">
    <location>
        <begin position="89"/>
        <end position="93"/>
    </location>
</feature>
<feature type="strand" evidence="7">
    <location>
        <begin position="106"/>
        <end position="109"/>
    </location>
</feature>
<feature type="helix" evidence="7">
    <location>
        <begin position="112"/>
        <end position="114"/>
    </location>
</feature>
<feature type="turn" evidence="7">
    <location>
        <begin position="116"/>
        <end position="121"/>
    </location>
</feature>
<feature type="helix" evidence="7">
    <location>
        <begin position="123"/>
        <end position="131"/>
    </location>
</feature>
<feature type="strand" evidence="7">
    <location>
        <begin position="134"/>
        <end position="138"/>
    </location>
</feature>
<feature type="helix" evidence="7">
    <location>
        <begin position="141"/>
        <end position="143"/>
    </location>
</feature>
<feature type="turn" evidence="7">
    <location>
        <begin position="149"/>
        <end position="153"/>
    </location>
</feature>
<feature type="helix" evidence="7">
    <location>
        <begin position="154"/>
        <end position="157"/>
    </location>
</feature>
<feature type="strand" evidence="7">
    <location>
        <begin position="158"/>
        <end position="163"/>
    </location>
</feature>
<feature type="helix" evidence="7">
    <location>
        <begin position="165"/>
        <end position="178"/>
    </location>
</feature>
<feature type="strand" evidence="7">
    <location>
        <begin position="182"/>
        <end position="192"/>
    </location>
</feature>
<feature type="turn" evidence="7">
    <location>
        <begin position="194"/>
        <end position="197"/>
    </location>
</feature>
<feature type="helix" evidence="7">
    <location>
        <begin position="198"/>
        <end position="205"/>
    </location>
</feature>
<feature type="strand" evidence="7">
    <location>
        <begin position="209"/>
        <end position="215"/>
    </location>
</feature>
<feature type="helix" evidence="7">
    <location>
        <begin position="216"/>
        <end position="224"/>
    </location>
</feature>
<feature type="helix" evidence="7">
    <location>
        <begin position="236"/>
        <end position="238"/>
    </location>
</feature>
<feature type="helix" evidence="7">
    <location>
        <begin position="239"/>
        <end position="246"/>
    </location>
</feature>
<feature type="strand" evidence="7">
    <location>
        <begin position="255"/>
        <end position="266"/>
    </location>
</feature>
<feature type="strand" evidence="7">
    <location>
        <begin position="270"/>
        <end position="273"/>
    </location>
</feature>
<feature type="helix" evidence="7">
    <location>
        <begin position="274"/>
        <end position="276"/>
    </location>
</feature>
<feature type="strand" evidence="7">
    <location>
        <begin position="282"/>
        <end position="286"/>
    </location>
</feature>
<feature type="helix" evidence="7">
    <location>
        <begin position="288"/>
        <end position="300"/>
    </location>
</feature>
<feature type="strand" evidence="7">
    <location>
        <begin position="302"/>
        <end position="308"/>
    </location>
</feature>
<feature type="helix" evidence="7">
    <location>
        <begin position="316"/>
        <end position="318"/>
    </location>
</feature>
<feature type="helix" evidence="7">
    <location>
        <begin position="320"/>
        <end position="331"/>
    </location>
</feature>
<feature type="strand" evidence="7">
    <location>
        <begin position="332"/>
        <end position="338"/>
    </location>
</feature>
<feature type="helix" evidence="7">
    <location>
        <begin position="341"/>
        <end position="350"/>
    </location>
</feature>
<feature type="helix" evidence="7">
    <location>
        <begin position="353"/>
        <end position="355"/>
    </location>
</feature>
<feature type="strand" evidence="7">
    <location>
        <begin position="356"/>
        <end position="359"/>
    </location>
</feature>
<feature type="helix" evidence="7">
    <location>
        <begin position="364"/>
        <end position="370"/>
    </location>
</feature>
<feature type="helix" evidence="7">
    <location>
        <begin position="376"/>
        <end position="384"/>
    </location>
</feature>
<proteinExistence type="evidence at protein level"/>
<sequence length="387" mass="41118">MSVIKMTDLDLAGKRVFIRADLNVPVKDGKVTSDARIRASLPTIELALKQGAKVMVTSHLGRPTEGEYNEEFSLLPVVNYLKDKLSNPVRLVKDYLDGVDVAEGELVVLENVRFNKGEKKDDETLSKKYAALCDVFVMDAFGTAHRAQASTHGIGKFADVACAGPLLAAELDALGKALKEPARPMVAIVGGSKVSTKLTVLDSLSKIADQLIVGGGIANTFIAAQGHDVGKSLYEADLVDEAKRLLTTCNIPVPSDVRVATEFSETAPATLKSVNDVKADEQILDIGDASAQELAEILKNAKTILWNGPVGVFEFPNFRKGTEIVANAIADSEAFSIAGGGDTLAAIDLFGIADKISYISTGGGAFLEFVEGKVLPAVAMLEERAKK</sequence>
<organism>
    <name type="scientific">Escherichia coli (strain K12)</name>
    <dbReference type="NCBI Taxonomy" id="83333"/>
    <lineage>
        <taxon>Bacteria</taxon>
        <taxon>Pseudomonadati</taxon>
        <taxon>Pseudomonadota</taxon>
        <taxon>Gammaproteobacteria</taxon>
        <taxon>Enterobacterales</taxon>
        <taxon>Enterobacteriaceae</taxon>
        <taxon>Escherichia</taxon>
    </lineage>
</organism>
<dbReference type="EC" id="2.7.2.3"/>
<dbReference type="EMBL" id="X14436">
    <property type="protein sequence ID" value="CAA32604.1"/>
    <property type="molecule type" value="Genomic_DNA"/>
</dbReference>
<dbReference type="EMBL" id="U28377">
    <property type="protein sequence ID" value="AAA69093.1"/>
    <property type="molecule type" value="Genomic_DNA"/>
</dbReference>
<dbReference type="EMBL" id="U00096">
    <property type="protein sequence ID" value="AAC75963.1"/>
    <property type="molecule type" value="Genomic_DNA"/>
</dbReference>
<dbReference type="EMBL" id="AP009048">
    <property type="protein sequence ID" value="BAE76990.1"/>
    <property type="molecule type" value="Genomic_DNA"/>
</dbReference>
<dbReference type="PIR" id="S04733">
    <property type="entry name" value="TVECG"/>
</dbReference>
<dbReference type="RefSeq" id="NP_417401.1">
    <property type="nucleotide sequence ID" value="NC_000913.3"/>
</dbReference>
<dbReference type="RefSeq" id="WP_000111269.1">
    <property type="nucleotide sequence ID" value="NZ_STEB01000001.1"/>
</dbReference>
<dbReference type="PDB" id="1ZMR">
    <property type="method" value="X-ray"/>
    <property type="resolution" value="2.40 A"/>
    <property type="chains" value="A=1-387"/>
</dbReference>
<dbReference type="PDBsum" id="1ZMR"/>
<dbReference type="SMR" id="P0A799"/>
<dbReference type="BioGRID" id="4262834">
    <property type="interactions" value="43"/>
</dbReference>
<dbReference type="BioGRID" id="851735">
    <property type="interactions" value="1"/>
</dbReference>
<dbReference type="DIP" id="DIP-36163N"/>
<dbReference type="FunCoup" id="P0A799">
    <property type="interactions" value="811"/>
</dbReference>
<dbReference type="IntAct" id="P0A799">
    <property type="interactions" value="16"/>
</dbReference>
<dbReference type="STRING" id="511145.b2926"/>
<dbReference type="iPTMnet" id="P0A799"/>
<dbReference type="jPOST" id="P0A799"/>
<dbReference type="PaxDb" id="511145-b2926"/>
<dbReference type="EnsemblBacteria" id="AAC75963">
    <property type="protein sequence ID" value="AAC75963"/>
    <property type="gene ID" value="b2926"/>
</dbReference>
<dbReference type="GeneID" id="89517738"/>
<dbReference type="GeneID" id="947414"/>
<dbReference type="KEGG" id="ecj:JW2893"/>
<dbReference type="KEGG" id="eco:b2926"/>
<dbReference type="KEGG" id="ecoc:C3026_16030"/>
<dbReference type="PATRIC" id="fig|1411691.4.peg.3806"/>
<dbReference type="EchoBASE" id="EB0697"/>
<dbReference type="eggNOG" id="COG0126">
    <property type="taxonomic scope" value="Bacteria"/>
</dbReference>
<dbReference type="HOGENOM" id="CLU_025427_0_2_6"/>
<dbReference type="InParanoid" id="P0A799"/>
<dbReference type="OMA" id="DMIFDIG"/>
<dbReference type="OrthoDB" id="9808460at2"/>
<dbReference type="PhylomeDB" id="P0A799"/>
<dbReference type="BioCyc" id="EcoCyc:PGK"/>
<dbReference type="BioCyc" id="MetaCyc:PGK"/>
<dbReference type="BRENDA" id="2.7.2.3">
    <property type="organism ID" value="2026"/>
</dbReference>
<dbReference type="SABIO-RK" id="P0A799"/>
<dbReference type="UniPathway" id="UPA00109">
    <property type="reaction ID" value="UER00185"/>
</dbReference>
<dbReference type="EvolutionaryTrace" id="P0A799"/>
<dbReference type="PRO" id="PR:P0A799"/>
<dbReference type="Proteomes" id="UP000000625">
    <property type="component" value="Chromosome"/>
</dbReference>
<dbReference type="GO" id="GO:0005829">
    <property type="term" value="C:cytosol"/>
    <property type="evidence" value="ECO:0000314"/>
    <property type="project" value="EcoCyc"/>
</dbReference>
<dbReference type="GO" id="GO:0043531">
    <property type="term" value="F:ADP binding"/>
    <property type="evidence" value="ECO:0000318"/>
    <property type="project" value="GO_Central"/>
</dbReference>
<dbReference type="GO" id="GO:0005524">
    <property type="term" value="F:ATP binding"/>
    <property type="evidence" value="ECO:0000318"/>
    <property type="project" value="GO_Central"/>
</dbReference>
<dbReference type="GO" id="GO:0097216">
    <property type="term" value="F:guanosine tetraphosphate binding"/>
    <property type="evidence" value="ECO:0000314"/>
    <property type="project" value="EcoCyc"/>
</dbReference>
<dbReference type="GO" id="GO:0004618">
    <property type="term" value="F:phosphoglycerate kinase activity"/>
    <property type="evidence" value="ECO:0000314"/>
    <property type="project" value="EcoCyc"/>
</dbReference>
<dbReference type="GO" id="GO:0006094">
    <property type="term" value="P:gluconeogenesis"/>
    <property type="evidence" value="ECO:0000318"/>
    <property type="project" value="GO_Central"/>
</dbReference>
<dbReference type="GO" id="GO:0006096">
    <property type="term" value="P:glycolytic process"/>
    <property type="evidence" value="ECO:0000314"/>
    <property type="project" value="EcoCyc"/>
</dbReference>
<dbReference type="CDD" id="cd00318">
    <property type="entry name" value="Phosphoglycerate_kinase"/>
    <property type="match status" value="1"/>
</dbReference>
<dbReference type="FunFam" id="3.40.50.1260:FF:000001">
    <property type="entry name" value="Phosphoglycerate kinase"/>
    <property type="match status" value="1"/>
</dbReference>
<dbReference type="FunFam" id="3.40.50.1260:FF:000002">
    <property type="entry name" value="Phosphoglycerate kinase"/>
    <property type="match status" value="1"/>
</dbReference>
<dbReference type="Gene3D" id="3.40.50.1260">
    <property type="entry name" value="Phosphoglycerate kinase, N-terminal domain"/>
    <property type="match status" value="2"/>
</dbReference>
<dbReference type="HAMAP" id="MF_00145">
    <property type="entry name" value="Phosphoglyc_kinase"/>
    <property type="match status" value="1"/>
</dbReference>
<dbReference type="InterPro" id="IPR001576">
    <property type="entry name" value="Phosphoglycerate_kinase"/>
</dbReference>
<dbReference type="InterPro" id="IPR015911">
    <property type="entry name" value="Phosphoglycerate_kinase_CS"/>
</dbReference>
<dbReference type="InterPro" id="IPR015824">
    <property type="entry name" value="Phosphoglycerate_kinase_N"/>
</dbReference>
<dbReference type="InterPro" id="IPR036043">
    <property type="entry name" value="Phosphoglycerate_kinase_sf"/>
</dbReference>
<dbReference type="PANTHER" id="PTHR11406">
    <property type="entry name" value="PHOSPHOGLYCERATE KINASE"/>
    <property type="match status" value="1"/>
</dbReference>
<dbReference type="PANTHER" id="PTHR11406:SF23">
    <property type="entry name" value="PHOSPHOGLYCERATE KINASE 1, CHLOROPLASTIC-RELATED"/>
    <property type="match status" value="1"/>
</dbReference>
<dbReference type="Pfam" id="PF00162">
    <property type="entry name" value="PGK"/>
    <property type="match status" value="1"/>
</dbReference>
<dbReference type="PIRSF" id="PIRSF000724">
    <property type="entry name" value="Pgk"/>
    <property type="match status" value="1"/>
</dbReference>
<dbReference type="PRINTS" id="PR00477">
    <property type="entry name" value="PHGLYCKINASE"/>
</dbReference>
<dbReference type="SUPFAM" id="SSF53748">
    <property type="entry name" value="Phosphoglycerate kinase"/>
    <property type="match status" value="1"/>
</dbReference>
<dbReference type="PROSITE" id="PS00111">
    <property type="entry name" value="PGLYCERATE_KINASE"/>
    <property type="match status" value="1"/>
</dbReference>
<gene>
    <name type="primary">pgk</name>
    <name type="ordered locus">b2926</name>
    <name type="ordered locus">JW2893</name>
</gene>
<comment type="catalytic activity">
    <reaction>
        <text>(2R)-3-phosphoglycerate + ATP = (2R)-3-phospho-glyceroyl phosphate + ADP</text>
        <dbReference type="Rhea" id="RHEA:14801"/>
        <dbReference type="ChEBI" id="CHEBI:30616"/>
        <dbReference type="ChEBI" id="CHEBI:57604"/>
        <dbReference type="ChEBI" id="CHEBI:58272"/>
        <dbReference type="ChEBI" id="CHEBI:456216"/>
        <dbReference type="EC" id="2.7.2.3"/>
    </reaction>
</comment>
<comment type="pathway">
    <text>Carbohydrate degradation; glycolysis; pyruvate from D-glyceraldehyde 3-phosphate: step 2/5.</text>
</comment>
<comment type="subunit">
    <text>Monomer.</text>
</comment>
<comment type="subcellular location">
    <subcellularLocation>
        <location>Cytoplasm</location>
    </subcellularLocation>
</comment>
<comment type="similarity">
    <text evidence="6">Belongs to the phosphoglycerate kinase family.</text>
</comment>
<keyword id="KW-0002">3D-structure</keyword>
<keyword id="KW-0007">Acetylation</keyword>
<keyword id="KW-0067">ATP-binding</keyword>
<keyword id="KW-0963">Cytoplasm</keyword>
<keyword id="KW-0903">Direct protein sequencing</keyword>
<keyword id="KW-0324">Glycolysis</keyword>
<keyword id="KW-0418">Kinase</keyword>
<keyword id="KW-0547">Nucleotide-binding</keyword>
<keyword id="KW-1185">Reference proteome</keyword>
<keyword id="KW-0808">Transferase</keyword>
<reference key="1">
    <citation type="journal article" date="1989" name="Mol. Microbiol.">
        <title>Identification, molecular cloning and sequence analysis of a gene cluster encoding the class II fructose 1,6-bisphosphate aldolase, 3-phosphoglycerate kinase and a putative second glyceraldehyde 3-phosphate dehydrogenase of Escherichia coli.</title>
        <authorList>
            <person name="Alefounder P.R."/>
            <person name="Perham R.N."/>
        </authorList>
    </citation>
    <scope>NUCLEOTIDE SEQUENCE [GENOMIC DNA]</scope>
    <source>
        <strain>K12 / CS520</strain>
    </source>
</reference>
<reference key="2">
    <citation type="journal article" date="1997" name="Science">
        <title>The complete genome sequence of Escherichia coli K-12.</title>
        <authorList>
            <person name="Blattner F.R."/>
            <person name="Plunkett G. III"/>
            <person name="Bloch C.A."/>
            <person name="Perna N.T."/>
            <person name="Burland V."/>
            <person name="Riley M."/>
            <person name="Collado-Vides J."/>
            <person name="Glasner J.D."/>
            <person name="Rode C.K."/>
            <person name="Mayhew G.F."/>
            <person name="Gregor J."/>
            <person name="Davis N.W."/>
            <person name="Kirkpatrick H.A."/>
            <person name="Goeden M.A."/>
            <person name="Rose D.J."/>
            <person name="Mau B."/>
            <person name="Shao Y."/>
        </authorList>
    </citation>
    <scope>NUCLEOTIDE SEQUENCE [LARGE SCALE GENOMIC DNA]</scope>
    <source>
        <strain>K12 / MG1655 / ATCC 47076</strain>
    </source>
</reference>
<reference key="3">
    <citation type="journal article" date="2006" name="Mol. Syst. Biol.">
        <title>Highly accurate genome sequences of Escherichia coli K-12 strains MG1655 and W3110.</title>
        <authorList>
            <person name="Hayashi K."/>
            <person name="Morooka N."/>
            <person name="Yamamoto Y."/>
            <person name="Fujita K."/>
            <person name="Isono K."/>
            <person name="Choi S."/>
            <person name="Ohtsubo E."/>
            <person name="Baba T."/>
            <person name="Wanner B.L."/>
            <person name="Mori H."/>
            <person name="Horiuchi T."/>
        </authorList>
    </citation>
    <scope>NUCLEOTIDE SEQUENCE [LARGE SCALE GENOMIC DNA]</scope>
    <source>
        <strain>K12 / W3110 / ATCC 27325 / DSM 5911</strain>
    </source>
</reference>
<reference key="4">
    <citation type="journal article" date="1997" name="Electrophoresis">
        <title>Comparing the predicted and observed properties of proteins encoded in the genome of Escherichia coli K-12.</title>
        <authorList>
            <person name="Link A.J."/>
            <person name="Robison K."/>
            <person name="Church G.M."/>
        </authorList>
    </citation>
    <scope>PROTEIN SEQUENCE OF 2-24</scope>
    <source>
        <strain>K12 / EMG2</strain>
    </source>
</reference>
<reference key="5">
    <citation type="submission" date="1996-02" db="UniProtKB">
        <authorList>
            <person name="Frutiger S."/>
            <person name="Hughes G.J."/>
            <person name="Pasquali C."/>
            <person name="Hochstrasser D.F."/>
        </authorList>
    </citation>
    <scope>PROTEIN SEQUENCE OF 2-12</scope>
    <source>
        <strain>K12 / W3110 / ATCC 27325 / DSM 5911</strain>
    </source>
</reference>
<reference key="6">
    <citation type="journal article" date="1998" name="J. Mol. Biol.">
        <title>Protein identification with N and C-terminal sequence tags in proteome projects.</title>
        <authorList>
            <person name="Wilkins M.R."/>
            <person name="Gasteiger E."/>
            <person name="Tonella L."/>
            <person name="Ou K."/>
            <person name="Tyler M."/>
            <person name="Sanchez J.-C."/>
            <person name="Gooley A.A."/>
            <person name="Walsh B.J."/>
            <person name="Bairoch A."/>
            <person name="Appel R.D."/>
            <person name="Williams K.L."/>
            <person name="Hochstrasser D.F."/>
        </authorList>
    </citation>
    <scope>PROTEIN SEQUENCE OF 2-5</scope>
    <source>
        <strain>K12 / W3110 / ATCC 27325 / DSM 5911</strain>
    </source>
</reference>
<reference key="7">
    <citation type="journal article" date="2009" name="Mol. Cell. Proteomics">
        <title>Lysine acetylation is a highly abundant and evolutionarily conserved modification in Escherichia coli.</title>
        <authorList>
            <person name="Zhang J."/>
            <person name="Sprung R."/>
            <person name="Pei J."/>
            <person name="Tan X."/>
            <person name="Kim S."/>
            <person name="Zhu H."/>
            <person name="Liu C.F."/>
            <person name="Grishin N.V."/>
            <person name="Zhao Y."/>
        </authorList>
    </citation>
    <scope>ACETYLATION [LARGE SCALE ANALYSIS] AT LYS-84</scope>
    <scope>IDENTIFICATION BY MASS SPECTROMETRY</scope>
    <source>
        <strain>K12 / JW1106</strain>
        <strain>K12 / MG1655 / ATCC 47076</strain>
    </source>
</reference>
<accession>P0A799</accession>
<accession>P11665</accession>
<accession>Q2M9R6</accession>
<name>PGK_ECOLI</name>
<protein>
    <recommendedName>
        <fullName>Phosphoglycerate kinase</fullName>
        <ecNumber>2.7.2.3</ecNumber>
    </recommendedName>
</protein>
<evidence type="ECO:0000250" key="1"/>
<evidence type="ECO:0000269" key="2">
    <source>
    </source>
</evidence>
<evidence type="ECO:0000269" key="3">
    <source>
    </source>
</evidence>
<evidence type="ECO:0000269" key="4">
    <source>
    </source>
</evidence>
<evidence type="ECO:0000269" key="5">
    <source ref="5"/>
</evidence>
<evidence type="ECO:0000305" key="6"/>
<evidence type="ECO:0007829" key="7">
    <source>
        <dbReference type="PDB" id="1ZMR"/>
    </source>
</evidence>